<organism>
    <name type="scientific">Bacillus licheniformis (strain ATCC 14580 / DSM 13 / JCM 2505 / CCUG 7422 / NBRC 12200 / NCIMB 9375 / NCTC 10341 / NRRL NRS-1264 / Gibson 46)</name>
    <dbReference type="NCBI Taxonomy" id="279010"/>
    <lineage>
        <taxon>Bacteria</taxon>
        <taxon>Bacillati</taxon>
        <taxon>Bacillota</taxon>
        <taxon>Bacilli</taxon>
        <taxon>Bacillales</taxon>
        <taxon>Bacillaceae</taxon>
        <taxon>Bacillus</taxon>
    </lineage>
</organism>
<keyword id="KW-1005">Bacterial flagellum biogenesis</keyword>
<keyword id="KW-0963">Cytoplasm</keyword>
<keyword id="KW-1185">Reference proteome</keyword>
<keyword id="KW-0678">Repressor</keyword>
<keyword id="KW-0694">RNA-binding</keyword>
<keyword id="KW-0810">Translation regulation</keyword>
<evidence type="ECO:0000255" key="1">
    <source>
        <dbReference type="HAMAP-Rule" id="MF_00167"/>
    </source>
</evidence>
<comment type="function">
    <text evidence="1">A translational regulator that binds mRNA to regulate translation initiation and/or mRNA stability. Usually binds in the 5'-UTR at or near the Shine-Dalgarno sequence preventing ribosome-binding, thus repressing translation. Its main target seems to be the major flagellin gene, while its function is anatagonized by FliW.</text>
</comment>
<comment type="subunit">
    <text evidence="1">Homodimer; the beta-strands of each monomer intercalate to form a hydrophobic core, while the alpha-helices form wings that extend away from the core.</text>
</comment>
<comment type="subcellular location">
    <subcellularLocation>
        <location evidence="1">Cytoplasm</location>
    </subcellularLocation>
</comment>
<comment type="similarity">
    <text evidence="1">Belongs to the CsrA/RsmA family.</text>
</comment>
<protein>
    <recommendedName>
        <fullName evidence="1">Translational regulator CsrA</fullName>
    </recommendedName>
</protein>
<feature type="chain" id="PRO_1000023361" description="Translational regulator CsrA">
    <location>
        <begin position="1"/>
        <end position="74"/>
    </location>
</feature>
<accession>Q65EB7</accession>
<accession>Q62PT6</accession>
<proteinExistence type="inferred from homology"/>
<reference key="1">
    <citation type="journal article" date="2004" name="J. Mol. Microbiol. Biotechnol.">
        <title>The complete genome sequence of Bacillus licheniformis DSM13, an organism with great industrial potential.</title>
        <authorList>
            <person name="Veith B."/>
            <person name="Herzberg C."/>
            <person name="Steckel S."/>
            <person name="Feesche J."/>
            <person name="Maurer K.H."/>
            <person name="Ehrenreich P."/>
            <person name="Baeumer S."/>
            <person name="Henne A."/>
            <person name="Liesegang H."/>
            <person name="Merkl R."/>
            <person name="Ehrenreich A."/>
            <person name="Gottschalk G."/>
        </authorList>
    </citation>
    <scope>NUCLEOTIDE SEQUENCE [LARGE SCALE GENOMIC DNA]</scope>
    <source>
        <strain>ATCC 14580 / DSM 13 / JCM 2505 / CCUG 7422 / NBRC 12200 / NCIMB 9375 / NCTC 10341 / NRRL NRS-1264 / Gibson 46</strain>
    </source>
</reference>
<reference key="2">
    <citation type="journal article" date="2004" name="Genome Biol.">
        <title>Complete genome sequence of the industrial bacterium Bacillus licheniformis and comparisons with closely related Bacillus species.</title>
        <authorList>
            <person name="Rey M.W."/>
            <person name="Ramaiya P."/>
            <person name="Nelson B.A."/>
            <person name="Brody-Karpin S.D."/>
            <person name="Zaretsky E.J."/>
            <person name="Tang M."/>
            <person name="Lopez de Leon A."/>
            <person name="Xiang H."/>
            <person name="Gusti V."/>
            <person name="Clausen I.G."/>
            <person name="Olsen P.B."/>
            <person name="Rasmussen M.D."/>
            <person name="Andersen J.T."/>
            <person name="Joergensen P.L."/>
            <person name="Larsen T.S."/>
            <person name="Sorokin A."/>
            <person name="Bolotin A."/>
            <person name="Lapidus A."/>
            <person name="Galleron N."/>
            <person name="Ehrlich S.D."/>
            <person name="Berka R.M."/>
        </authorList>
    </citation>
    <scope>NUCLEOTIDE SEQUENCE [LARGE SCALE GENOMIC DNA]</scope>
    <source>
        <strain>ATCC 14580 / DSM 13 / JCM 2505 / CCUG 7422 / NBRC 12200 / NCIMB 9375 / NCTC 10341 / NRRL NRS-1264 / Gibson 46</strain>
    </source>
</reference>
<name>CSRA_BACLD</name>
<dbReference type="EMBL" id="CP000002">
    <property type="protein sequence ID" value="AAU25225.1"/>
    <property type="molecule type" value="Genomic_DNA"/>
</dbReference>
<dbReference type="EMBL" id="AE017333">
    <property type="protein sequence ID" value="AAU42597.1"/>
    <property type="molecule type" value="Genomic_DNA"/>
</dbReference>
<dbReference type="RefSeq" id="WP_003185697.1">
    <property type="nucleotide sequence ID" value="NC_006322.1"/>
</dbReference>
<dbReference type="SMR" id="Q65EB7"/>
<dbReference type="STRING" id="279010.BL03373"/>
<dbReference type="GeneID" id="92859644"/>
<dbReference type="KEGG" id="bld:BLi03781"/>
<dbReference type="KEGG" id="bli:BL03373"/>
<dbReference type="eggNOG" id="COG1551">
    <property type="taxonomic scope" value="Bacteria"/>
</dbReference>
<dbReference type="HOGENOM" id="CLU_164837_0_2_9"/>
<dbReference type="Proteomes" id="UP000000606">
    <property type="component" value="Chromosome"/>
</dbReference>
<dbReference type="GO" id="GO:0005829">
    <property type="term" value="C:cytosol"/>
    <property type="evidence" value="ECO:0007669"/>
    <property type="project" value="TreeGrafter"/>
</dbReference>
<dbReference type="GO" id="GO:0048027">
    <property type="term" value="F:mRNA 5'-UTR binding"/>
    <property type="evidence" value="ECO:0007669"/>
    <property type="project" value="UniProtKB-UniRule"/>
</dbReference>
<dbReference type="GO" id="GO:0044781">
    <property type="term" value="P:bacterial-type flagellum organization"/>
    <property type="evidence" value="ECO:0007669"/>
    <property type="project" value="UniProtKB-KW"/>
</dbReference>
<dbReference type="GO" id="GO:0006402">
    <property type="term" value="P:mRNA catabolic process"/>
    <property type="evidence" value="ECO:0007669"/>
    <property type="project" value="InterPro"/>
</dbReference>
<dbReference type="GO" id="GO:0045947">
    <property type="term" value="P:negative regulation of translational initiation"/>
    <property type="evidence" value="ECO:0007669"/>
    <property type="project" value="UniProtKB-UniRule"/>
</dbReference>
<dbReference type="GO" id="GO:1902208">
    <property type="term" value="P:regulation of bacterial-type flagellum assembly"/>
    <property type="evidence" value="ECO:0007669"/>
    <property type="project" value="UniProtKB-UniRule"/>
</dbReference>
<dbReference type="GO" id="GO:0006109">
    <property type="term" value="P:regulation of carbohydrate metabolic process"/>
    <property type="evidence" value="ECO:0007669"/>
    <property type="project" value="InterPro"/>
</dbReference>
<dbReference type="FunFam" id="2.60.40.4380:FF:000002">
    <property type="entry name" value="Translational regulator CsrA"/>
    <property type="match status" value="1"/>
</dbReference>
<dbReference type="Gene3D" id="2.60.40.4380">
    <property type="entry name" value="Translational regulator CsrA"/>
    <property type="match status" value="1"/>
</dbReference>
<dbReference type="HAMAP" id="MF_00167">
    <property type="entry name" value="CsrA"/>
    <property type="match status" value="1"/>
</dbReference>
<dbReference type="InterPro" id="IPR003751">
    <property type="entry name" value="CsrA"/>
</dbReference>
<dbReference type="InterPro" id="IPR036107">
    <property type="entry name" value="CsrA_sf"/>
</dbReference>
<dbReference type="NCBIfam" id="TIGR00202">
    <property type="entry name" value="csrA"/>
    <property type="match status" value="1"/>
</dbReference>
<dbReference type="NCBIfam" id="NF002469">
    <property type="entry name" value="PRK01712.1"/>
    <property type="match status" value="1"/>
</dbReference>
<dbReference type="PANTHER" id="PTHR34984">
    <property type="entry name" value="CARBON STORAGE REGULATOR"/>
    <property type="match status" value="1"/>
</dbReference>
<dbReference type="PANTHER" id="PTHR34984:SF1">
    <property type="entry name" value="CARBON STORAGE REGULATOR"/>
    <property type="match status" value="1"/>
</dbReference>
<dbReference type="Pfam" id="PF02599">
    <property type="entry name" value="CsrA"/>
    <property type="match status" value="1"/>
</dbReference>
<dbReference type="SUPFAM" id="SSF117130">
    <property type="entry name" value="CsrA-like"/>
    <property type="match status" value="1"/>
</dbReference>
<gene>
    <name evidence="1" type="primary">csrA</name>
    <name type="ordered locus">BLi03781</name>
    <name type="ordered locus">BL03373</name>
</gene>
<sequence length="74" mass="8252">MLVLSRKLNEAIQIGDDIEVKIISVDGDQVKIGIDAPKHIEIHRKEIYLAIQEENSRAASISNDLLAKLSSQKK</sequence>